<sequence>MSQRAPIVTIDGPSGAGKGTISQILASRLGWKLLDSGAIYRVLALAAIHHNVELDNEASLALLAAHLDVQFITANGNGIKVVLEGEDVSHAIRSQECSNAASKVAAFPRVREALLRRQRAFAEAPGLIADGRDMGTVVFPTSPAKLYLTASAEERAQRRYNQLQDKGFDVNIDRLLAEVVERDERDMNRPVAPLVPAEDALVIDTTGIGIDEVVELALSHIKEKLPDLVL</sequence>
<evidence type="ECO:0000255" key="1">
    <source>
        <dbReference type="HAMAP-Rule" id="MF_00238"/>
    </source>
</evidence>
<accession>A3QEC1</accession>
<proteinExistence type="inferred from homology"/>
<dbReference type="EC" id="2.7.4.25" evidence="1"/>
<dbReference type="EMBL" id="CP000606">
    <property type="protein sequence ID" value="ABO23819.1"/>
    <property type="molecule type" value="Genomic_DNA"/>
</dbReference>
<dbReference type="RefSeq" id="WP_011865751.1">
    <property type="nucleotide sequence ID" value="NC_009092.1"/>
</dbReference>
<dbReference type="SMR" id="A3QEC1"/>
<dbReference type="STRING" id="323850.Shew_1953"/>
<dbReference type="KEGG" id="slo:Shew_1953"/>
<dbReference type="eggNOG" id="COG0283">
    <property type="taxonomic scope" value="Bacteria"/>
</dbReference>
<dbReference type="HOGENOM" id="CLU_079959_2_0_6"/>
<dbReference type="OrthoDB" id="9807434at2"/>
<dbReference type="Proteomes" id="UP000001558">
    <property type="component" value="Chromosome"/>
</dbReference>
<dbReference type="GO" id="GO:0005829">
    <property type="term" value="C:cytosol"/>
    <property type="evidence" value="ECO:0007669"/>
    <property type="project" value="TreeGrafter"/>
</dbReference>
<dbReference type="GO" id="GO:0005524">
    <property type="term" value="F:ATP binding"/>
    <property type="evidence" value="ECO:0007669"/>
    <property type="project" value="UniProtKB-UniRule"/>
</dbReference>
<dbReference type="GO" id="GO:0036430">
    <property type="term" value="F:CMP kinase activity"/>
    <property type="evidence" value="ECO:0007669"/>
    <property type="project" value="RHEA"/>
</dbReference>
<dbReference type="GO" id="GO:0036431">
    <property type="term" value="F:dCMP kinase activity"/>
    <property type="evidence" value="ECO:0007669"/>
    <property type="project" value="RHEA"/>
</dbReference>
<dbReference type="GO" id="GO:0015949">
    <property type="term" value="P:nucleobase-containing small molecule interconversion"/>
    <property type="evidence" value="ECO:0007669"/>
    <property type="project" value="TreeGrafter"/>
</dbReference>
<dbReference type="GO" id="GO:0006220">
    <property type="term" value="P:pyrimidine nucleotide metabolic process"/>
    <property type="evidence" value="ECO:0007669"/>
    <property type="project" value="UniProtKB-UniRule"/>
</dbReference>
<dbReference type="CDD" id="cd02020">
    <property type="entry name" value="CMPK"/>
    <property type="match status" value="1"/>
</dbReference>
<dbReference type="FunFam" id="3.40.50.300:FF:000262">
    <property type="entry name" value="Cytidylate kinase"/>
    <property type="match status" value="1"/>
</dbReference>
<dbReference type="Gene3D" id="3.40.50.300">
    <property type="entry name" value="P-loop containing nucleotide triphosphate hydrolases"/>
    <property type="match status" value="1"/>
</dbReference>
<dbReference type="HAMAP" id="MF_00238">
    <property type="entry name" value="Cytidyl_kinase_type1"/>
    <property type="match status" value="1"/>
</dbReference>
<dbReference type="InterPro" id="IPR003136">
    <property type="entry name" value="Cytidylate_kin"/>
</dbReference>
<dbReference type="InterPro" id="IPR011994">
    <property type="entry name" value="Cytidylate_kinase_dom"/>
</dbReference>
<dbReference type="InterPro" id="IPR027417">
    <property type="entry name" value="P-loop_NTPase"/>
</dbReference>
<dbReference type="NCBIfam" id="TIGR00017">
    <property type="entry name" value="cmk"/>
    <property type="match status" value="1"/>
</dbReference>
<dbReference type="PANTHER" id="PTHR21299:SF2">
    <property type="entry name" value="CYTIDYLATE KINASE"/>
    <property type="match status" value="1"/>
</dbReference>
<dbReference type="PANTHER" id="PTHR21299">
    <property type="entry name" value="CYTIDYLATE KINASE/PANTOATE-BETA-ALANINE LIGASE"/>
    <property type="match status" value="1"/>
</dbReference>
<dbReference type="Pfam" id="PF02224">
    <property type="entry name" value="Cytidylate_kin"/>
    <property type="match status" value="1"/>
</dbReference>
<dbReference type="SUPFAM" id="SSF52540">
    <property type="entry name" value="P-loop containing nucleoside triphosphate hydrolases"/>
    <property type="match status" value="1"/>
</dbReference>
<name>KCY_SHELP</name>
<keyword id="KW-0067">ATP-binding</keyword>
<keyword id="KW-0963">Cytoplasm</keyword>
<keyword id="KW-0418">Kinase</keyword>
<keyword id="KW-0547">Nucleotide-binding</keyword>
<keyword id="KW-1185">Reference proteome</keyword>
<keyword id="KW-0808">Transferase</keyword>
<protein>
    <recommendedName>
        <fullName evidence="1">Cytidylate kinase</fullName>
        <shortName evidence="1">CK</shortName>
        <ecNumber evidence="1">2.7.4.25</ecNumber>
    </recommendedName>
    <alternativeName>
        <fullName evidence="1">Cytidine monophosphate kinase</fullName>
        <shortName evidence="1">CMP kinase</shortName>
    </alternativeName>
</protein>
<reference key="1">
    <citation type="submission" date="2007-03" db="EMBL/GenBank/DDBJ databases">
        <title>Complete sequence of Shewanella loihica PV-4.</title>
        <authorList>
            <consortium name="US DOE Joint Genome Institute"/>
            <person name="Copeland A."/>
            <person name="Lucas S."/>
            <person name="Lapidus A."/>
            <person name="Barry K."/>
            <person name="Detter J.C."/>
            <person name="Glavina del Rio T."/>
            <person name="Hammon N."/>
            <person name="Israni S."/>
            <person name="Dalin E."/>
            <person name="Tice H."/>
            <person name="Pitluck S."/>
            <person name="Chain P."/>
            <person name="Malfatti S."/>
            <person name="Shin M."/>
            <person name="Vergez L."/>
            <person name="Schmutz J."/>
            <person name="Larimer F."/>
            <person name="Land M."/>
            <person name="Hauser L."/>
            <person name="Kyrpides N."/>
            <person name="Mikhailova N."/>
            <person name="Romine M.F."/>
            <person name="Serres G."/>
            <person name="Fredrickson J."/>
            <person name="Tiedje J."/>
            <person name="Richardson P."/>
        </authorList>
    </citation>
    <scope>NUCLEOTIDE SEQUENCE [LARGE SCALE GENOMIC DNA]</scope>
    <source>
        <strain>ATCC BAA-1088 / PV-4</strain>
    </source>
</reference>
<organism>
    <name type="scientific">Shewanella loihica (strain ATCC BAA-1088 / PV-4)</name>
    <dbReference type="NCBI Taxonomy" id="323850"/>
    <lineage>
        <taxon>Bacteria</taxon>
        <taxon>Pseudomonadati</taxon>
        <taxon>Pseudomonadota</taxon>
        <taxon>Gammaproteobacteria</taxon>
        <taxon>Alteromonadales</taxon>
        <taxon>Shewanellaceae</taxon>
        <taxon>Shewanella</taxon>
    </lineage>
</organism>
<comment type="catalytic activity">
    <reaction evidence="1">
        <text>CMP + ATP = CDP + ADP</text>
        <dbReference type="Rhea" id="RHEA:11600"/>
        <dbReference type="ChEBI" id="CHEBI:30616"/>
        <dbReference type="ChEBI" id="CHEBI:58069"/>
        <dbReference type="ChEBI" id="CHEBI:60377"/>
        <dbReference type="ChEBI" id="CHEBI:456216"/>
        <dbReference type="EC" id="2.7.4.25"/>
    </reaction>
</comment>
<comment type="catalytic activity">
    <reaction evidence="1">
        <text>dCMP + ATP = dCDP + ADP</text>
        <dbReference type="Rhea" id="RHEA:25094"/>
        <dbReference type="ChEBI" id="CHEBI:30616"/>
        <dbReference type="ChEBI" id="CHEBI:57566"/>
        <dbReference type="ChEBI" id="CHEBI:58593"/>
        <dbReference type="ChEBI" id="CHEBI:456216"/>
        <dbReference type="EC" id="2.7.4.25"/>
    </reaction>
</comment>
<comment type="subcellular location">
    <subcellularLocation>
        <location evidence="1">Cytoplasm</location>
    </subcellularLocation>
</comment>
<comment type="similarity">
    <text evidence="1">Belongs to the cytidylate kinase family. Type 1 subfamily.</text>
</comment>
<feature type="chain" id="PRO_1000048276" description="Cytidylate kinase">
    <location>
        <begin position="1"/>
        <end position="230"/>
    </location>
</feature>
<feature type="binding site" evidence="1">
    <location>
        <begin position="12"/>
        <end position="20"/>
    </location>
    <ligand>
        <name>ATP</name>
        <dbReference type="ChEBI" id="CHEBI:30616"/>
    </ligand>
</feature>
<gene>
    <name evidence="1" type="primary">cmk</name>
    <name type="ordered locus">Shew_1953</name>
</gene>